<feature type="chain" id="PRO_0000202188" description="Uncharacterized protein TP_0084">
    <location>
        <begin position="1"/>
        <end position="77"/>
    </location>
</feature>
<organism>
    <name type="scientific">Treponema pallidum (strain Nichols)</name>
    <dbReference type="NCBI Taxonomy" id="243276"/>
    <lineage>
        <taxon>Bacteria</taxon>
        <taxon>Pseudomonadati</taxon>
        <taxon>Spirochaetota</taxon>
        <taxon>Spirochaetia</taxon>
        <taxon>Spirochaetales</taxon>
        <taxon>Treponemataceae</taxon>
        <taxon>Treponema</taxon>
    </lineage>
</organism>
<reference key="1">
    <citation type="journal article" date="1998" name="Science">
        <title>Complete genome sequence of Treponema pallidum, the syphilis spirochete.</title>
        <authorList>
            <person name="Fraser C.M."/>
            <person name="Norris S.J."/>
            <person name="Weinstock G.M."/>
            <person name="White O."/>
            <person name="Sutton G.G."/>
            <person name="Dodson R.J."/>
            <person name="Gwinn M.L."/>
            <person name="Hickey E.K."/>
            <person name="Clayton R.A."/>
            <person name="Ketchum K.A."/>
            <person name="Sodergren E."/>
            <person name="Hardham J.M."/>
            <person name="McLeod M.P."/>
            <person name="Salzberg S.L."/>
            <person name="Peterson J.D."/>
            <person name="Khalak H.G."/>
            <person name="Richardson D.L."/>
            <person name="Howell J.K."/>
            <person name="Chidambaram M."/>
            <person name="Utterback T.R."/>
            <person name="McDonald L.A."/>
            <person name="Artiach P."/>
            <person name="Bowman C."/>
            <person name="Cotton M.D."/>
            <person name="Fujii C."/>
            <person name="Garland S.A."/>
            <person name="Hatch B."/>
            <person name="Horst K."/>
            <person name="Roberts K.M."/>
            <person name="Sandusky M."/>
            <person name="Weidman J.F."/>
            <person name="Smith H.O."/>
            <person name="Venter J.C."/>
        </authorList>
    </citation>
    <scope>NUCLEOTIDE SEQUENCE [LARGE SCALE GENOMIC DNA]</scope>
    <source>
        <strain>Nichols</strain>
    </source>
</reference>
<dbReference type="EMBL" id="AE000520">
    <property type="protein sequence ID" value="AAC65088.1"/>
    <property type="molecule type" value="Genomic_DNA"/>
</dbReference>
<dbReference type="PIR" id="E71367">
    <property type="entry name" value="E71367"/>
</dbReference>
<dbReference type="RefSeq" id="WP_010881533.1">
    <property type="nucleotide sequence ID" value="NC_021490.2"/>
</dbReference>
<dbReference type="SMR" id="O83122"/>
<dbReference type="IntAct" id="O83122">
    <property type="interactions" value="15"/>
</dbReference>
<dbReference type="EnsemblBacteria" id="AAC65088">
    <property type="protein sequence ID" value="AAC65088"/>
    <property type="gene ID" value="TP_0084"/>
</dbReference>
<dbReference type="KEGG" id="tpa:TP_0084"/>
<dbReference type="KEGG" id="tpw:TPANIC_0084"/>
<dbReference type="eggNOG" id="ENOG5032FFX">
    <property type="taxonomic scope" value="Bacteria"/>
</dbReference>
<dbReference type="HOGENOM" id="CLU_2636990_0_0_12"/>
<dbReference type="OrthoDB" id="361409at2"/>
<dbReference type="Proteomes" id="UP000000811">
    <property type="component" value="Chromosome"/>
</dbReference>
<protein>
    <recommendedName>
        <fullName>Uncharacterized protein TP_0084</fullName>
    </recommendedName>
</protein>
<accession>O83122</accession>
<proteinExistence type="predicted"/>
<gene>
    <name type="ordered locus">TP_0084</name>
</gene>
<name>Y084_TREPA</name>
<keyword id="KW-1185">Reference proteome</keyword>
<sequence length="77" mass="8224">MVVNAVVGADEASARLREYCSGLPDVEKKIAESTSPEGAKLVSDFGIGSVPMVVILDEDSSELFRTADIGELEKFFS</sequence>